<comment type="function">
    <text evidence="1">Component of the RavA-ViaA chaperone complex, which may act on the membrane to optimize the function of some of the respiratory chains. RavA functions as an ATPase.</text>
</comment>
<comment type="catalytic activity">
    <reaction evidence="1">
        <text>ATP + H2O = ADP + phosphate + H(+)</text>
        <dbReference type="Rhea" id="RHEA:13065"/>
        <dbReference type="ChEBI" id="CHEBI:15377"/>
        <dbReference type="ChEBI" id="CHEBI:15378"/>
        <dbReference type="ChEBI" id="CHEBI:30616"/>
        <dbReference type="ChEBI" id="CHEBI:43474"/>
        <dbReference type="ChEBI" id="CHEBI:456216"/>
    </reaction>
</comment>
<comment type="activity regulation">
    <text evidence="1">ATPase activity is stimulated by ViaA.</text>
</comment>
<comment type="subunit">
    <text evidence="1">Homohexamer. Interacts with ViaA.</text>
</comment>
<comment type="subcellular location">
    <subcellularLocation>
        <location evidence="1">Cytoplasm</location>
    </subcellularLocation>
</comment>
<comment type="similarity">
    <text evidence="1">Belongs to the RavA family.</text>
</comment>
<comment type="sequence caution" evidence="2">
    <conflict type="erroneous initiation">
        <sequence resource="EMBL-CDS" id="AAN83106"/>
    </conflict>
</comment>
<feature type="chain" id="PRO_0000209372" description="Regulatory ATPase RavA">
    <location>
        <begin position="1"/>
        <end position="498"/>
    </location>
</feature>
<feature type="binding site" evidence="1">
    <location>
        <position position="23"/>
    </location>
    <ligand>
        <name>ADP</name>
        <dbReference type="ChEBI" id="CHEBI:456216"/>
    </ligand>
</feature>
<feature type="binding site" evidence="1">
    <location>
        <position position="49"/>
    </location>
    <ligand>
        <name>ADP</name>
        <dbReference type="ChEBI" id="CHEBI:456216"/>
    </ligand>
</feature>
<feature type="binding site" evidence="1">
    <location>
        <position position="50"/>
    </location>
    <ligand>
        <name>ADP</name>
        <dbReference type="ChEBI" id="CHEBI:456216"/>
    </ligand>
</feature>
<feature type="binding site" evidence="1">
    <location>
        <position position="51"/>
    </location>
    <ligand>
        <name>ADP</name>
        <dbReference type="ChEBI" id="CHEBI:456216"/>
    </ligand>
</feature>
<feature type="binding site" evidence="1">
    <location>
        <position position="52"/>
    </location>
    <ligand>
        <name>ADP</name>
        <dbReference type="ChEBI" id="CHEBI:456216"/>
    </ligand>
</feature>
<feature type="binding site" evidence="1">
    <location>
        <position position="53"/>
    </location>
    <ligand>
        <name>ADP</name>
        <dbReference type="ChEBI" id="CHEBI:456216"/>
    </ligand>
</feature>
<feature type="binding site" evidence="1">
    <location>
        <position position="54"/>
    </location>
    <ligand>
        <name>ADP</name>
        <dbReference type="ChEBI" id="CHEBI:456216"/>
    </ligand>
</feature>
<feature type="binding site" evidence="1">
    <location>
        <position position="196"/>
    </location>
    <ligand>
        <name>ADP</name>
        <dbReference type="ChEBI" id="CHEBI:456216"/>
    </ligand>
</feature>
<accession>Q8FBS5</accession>
<reference key="1">
    <citation type="journal article" date="2002" name="Proc. Natl. Acad. Sci. U.S.A.">
        <title>Extensive mosaic structure revealed by the complete genome sequence of uropathogenic Escherichia coli.</title>
        <authorList>
            <person name="Welch R.A."/>
            <person name="Burland V."/>
            <person name="Plunkett G. III"/>
            <person name="Redford P."/>
            <person name="Roesch P."/>
            <person name="Rasko D."/>
            <person name="Buckles E.L."/>
            <person name="Liou S.-R."/>
            <person name="Boutin A."/>
            <person name="Hackett J."/>
            <person name="Stroud D."/>
            <person name="Mayhew G.F."/>
            <person name="Rose D.J."/>
            <person name="Zhou S."/>
            <person name="Schwartz D.C."/>
            <person name="Perna N.T."/>
            <person name="Mobley H.L.T."/>
            <person name="Donnenberg M.S."/>
            <person name="Blattner F.R."/>
        </authorList>
    </citation>
    <scope>NUCLEOTIDE SEQUENCE [LARGE SCALE GENOMIC DNA]</scope>
    <source>
        <strain>CFT073 / ATCC 700928 / UPEC</strain>
    </source>
</reference>
<organism>
    <name type="scientific">Escherichia coli O6:H1 (strain CFT073 / ATCC 700928 / UPEC)</name>
    <dbReference type="NCBI Taxonomy" id="199310"/>
    <lineage>
        <taxon>Bacteria</taxon>
        <taxon>Pseudomonadati</taxon>
        <taxon>Pseudomonadota</taxon>
        <taxon>Gammaproteobacteria</taxon>
        <taxon>Enterobacterales</taxon>
        <taxon>Enterobacteriaceae</taxon>
        <taxon>Escherichia</taxon>
    </lineage>
</organism>
<name>RAVA_ECOL6</name>
<sequence>MAHPHLLAERISRLSSSLEKGLYERSHAIRLCLLAALSGESVFLLGPPGIAKSLIARRLKFAFQNARAFEYLMTRFSTPEEVFGPLSIQALKDEGRYERLTSGYLPEAEIVFLDEIWKAGPAILNTLLTAINERQFRNGALVEKIPMRLLVAASNELPEADSSLEALYDRMLIRLWLDKVQDKANFRSMLTSQQDENDNPVPASLQITDEEYERWQKEIGEITLPDHVFELIFMLRQQLDKLPDAPYVSDRRWKKAIRLLQASAFFSGRSAVAPVDLILLKDCLWYDAQSLNLIQQQIDVLMTGHAWQQQGMLTRLGAIVQRHLQLQQQQSDKTALTVIRLGGIFSRRQQYQLPVNVTASTLTLLLQKPLKLHDMEVVHISFERSALEQWLSKGGEIRGKLNGIGFAQKLNLEVDSAQHLVVRDVSLQGSTLALPGSLAEGLPGEIKQQLEELESDWRKQHALFSEQQKCLFIPGDWLGRIEASLQDVGAQIRQAQQC</sequence>
<gene>
    <name evidence="1" type="primary">ravA</name>
    <name type="ordered locus">c4674</name>
</gene>
<keyword id="KW-0067">ATP-binding</keyword>
<keyword id="KW-0143">Chaperone</keyword>
<keyword id="KW-0963">Cytoplasm</keyword>
<keyword id="KW-0378">Hydrolase</keyword>
<keyword id="KW-0547">Nucleotide-binding</keyword>
<keyword id="KW-1185">Reference proteome</keyword>
<proteinExistence type="inferred from homology"/>
<protein>
    <recommendedName>
        <fullName evidence="1">Regulatory ATPase RavA</fullName>
        <ecNumber evidence="1">3.6.1.-</ecNumber>
    </recommendedName>
    <alternativeName>
        <fullName evidence="1">Regulatory ATPase variant A</fullName>
    </alternativeName>
</protein>
<dbReference type="EC" id="3.6.1.-" evidence="1"/>
<dbReference type="EMBL" id="AE014075">
    <property type="protein sequence ID" value="AAN83106.1"/>
    <property type="status" value="ALT_INIT"/>
    <property type="molecule type" value="Genomic_DNA"/>
</dbReference>
<dbReference type="RefSeq" id="WP_001305014.1">
    <property type="nucleotide sequence ID" value="NZ_CP051263.1"/>
</dbReference>
<dbReference type="SMR" id="Q8FBS5"/>
<dbReference type="STRING" id="199310.c4674"/>
<dbReference type="KEGG" id="ecc:c4674"/>
<dbReference type="eggNOG" id="COG0714">
    <property type="taxonomic scope" value="Bacteria"/>
</dbReference>
<dbReference type="HOGENOM" id="CLU_018678_1_0_6"/>
<dbReference type="Proteomes" id="UP000001410">
    <property type="component" value="Chromosome"/>
</dbReference>
<dbReference type="GO" id="GO:0005737">
    <property type="term" value="C:cytoplasm"/>
    <property type="evidence" value="ECO:0007669"/>
    <property type="project" value="UniProtKB-SubCell"/>
</dbReference>
<dbReference type="GO" id="GO:0005524">
    <property type="term" value="F:ATP binding"/>
    <property type="evidence" value="ECO:0007669"/>
    <property type="project" value="UniProtKB-KW"/>
</dbReference>
<dbReference type="GO" id="GO:0016887">
    <property type="term" value="F:ATP hydrolysis activity"/>
    <property type="evidence" value="ECO:0007669"/>
    <property type="project" value="UniProtKB-UniRule"/>
</dbReference>
<dbReference type="CDD" id="cd00009">
    <property type="entry name" value="AAA"/>
    <property type="match status" value="1"/>
</dbReference>
<dbReference type="FunFam" id="3.40.50.300:FF:000410">
    <property type="entry name" value="ATPase RavA"/>
    <property type="match status" value="1"/>
</dbReference>
<dbReference type="Gene3D" id="1.20.58.1510">
    <property type="match status" value="1"/>
</dbReference>
<dbReference type="Gene3D" id="2.40.128.430">
    <property type="match status" value="1"/>
</dbReference>
<dbReference type="Gene3D" id="3.40.50.300">
    <property type="entry name" value="P-loop containing nucleotide triphosphate hydrolases"/>
    <property type="match status" value="1"/>
</dbReference>
<dbReference type="HAMAP" id="MF_01625">
    <property type="entry name" value="ATPase_RavA"/>
    <property type="match status" value="1"/>
</dbReference>
<dbReference type="InterPro" id="IPR003593">
    <property type="entry name" value="AAA+_ATPase"/>
</dbReference>
<dbReference type="InterPro" id="IPR023671">
    <property type="entry name" value="ATPase_RavA"/>
</dbReference>
<dbReference type="InterPro" id="IPR022547">
    <property type="entry name" value="ATPase_RavA_C"/>
</dbReference>
<dbReference type="InterPro" id="IPR045427">
    <property type="entry name" value="MoxR"/>
</dbReference>
<dbReference type="InterPro" id="IPR027417">
    <property type="entry name" value="P-loop_NTPase"/>
</dbReference>
<dbReference type="InterPro" id="IPR041538">
    <property type="entry name" value="RavA-like_AAA_lid"/>
</dbReference>
<dbReference type="InterPro" id="IPR050513">
    <property type="entry name" value="RavA_ATPases"/>
</dbReference>
<dbReference type="InterPro" id="IPR046898">
    <property type="entry name" value="RavA_LARA_dom"/>
</dbReference>
<dbReference type="InterPro" id="IPR046932">
    <property type="entry name" value="RavA_LARA_sf"/>
</dbReference>
<dbReference type="NCBIfam" id="NF010054">
    <property type="entry name" value="PRK13531.1"/>
    <property type="match status" value="1"/>
</dbReference>
<dbReference type="PANTHER" id="PTHR32204">
    <property type="entry name" value="ATPASE RAVA"/>
    <property type="match status" value="1"/>
</dbReference>
<dbReference type="PANTHER" id="PTHR32204:SF0">
    <property type="entry name" value="ATPASE RAVA"/>
    <property type="match status" value="1"/>
</dbReference>
<dbReference type="Pfam" id="PF17868">
    <property type="entry name" value="AAA_lid_8"/>
    <property type="match status" value="1"/>
</dbReference>
<dbReference type="Pfam" id="PF12592">
    <property type="entry name" value="ATPase_RavA_C"/>
    <property type="match status" value="1"/>
</dbReference>
<dbReference type="Pfam" id="PF20030">
    <property type="entry name" value="bpMoxR"/>
    <property type="match status" value="1"/>
</dbReference>
<dbReference type="Pfam" id="PF20265">
    <property type="entry name" value="LARA_dom"/>
    <property type="match status" value="1"/>
</dbReference>
<dbReference type="SMART" id="SM00382">
    <property type="entry name" value="AAA"/>
    <property type="match status" value="1"/>
</dbReference>
<dbReference type="SUPFAM" id="SSF52540">
    <property type="entry name" value="P-loop containing nucleoside triphosphate hydrolases"/>
    <property type="match status" value="1"/>
</dbReference>
<evidence type="ECO:0000255" key="1">
    <source>
        <dbReference type="HAMAP-Rule" id="MF_01625"/>
    </source>
</evidence>
<evidence type="ECO:0000305" key="2"/>